<accession>Q57957</accession>
<protein>
    <recommendedName>
        <fullName>2-oxoglutarate synthase subunit KorB</fullName>
        <ecNumber>1.2.7.3</ecNumber>
    </recommendedName>
    <alternativeName>
        <fullName>2-ketoglutarate oxidoreductase beta chain</fullName>
        <shortName>KOR</shortName>
    </alternativeName>
    <alternativeName>
        <fullName>2-oxoglutarate-ferredoxin oxidoreductase subunit beta</fullName>
    </alternativeName>
</protein>
<sequence>MHPALKYMRQDRLPHIFCSGCGNGIVMNCFLKAIEELNIKPEDYIAVSGIGCSSRVPGYLYCDSLHTTHGRPIAFATGIKIARPDKHVVVFTGDGDLAAIGGNHFIHGCRRNIDLTVICINNNIYGMTGGQVSPTTPYGKKATTAPYGSIENTMDLCKMAIAAGATYVARWTTAHPIQLVRSIKKGIQKKGFAFIEVVSQCPTYYGRFNISRKPADMIKFLKENSIHLNKAKDMSEEELNGKIVVGEFLDIEKPEFVEELHKLIEKLKSE</sequence>
<reference key="1">
    <citation type="journal article" date="1996" name="Science">
        <title>Complete genome sequence of the methanogenic archaeon, Methanococcus jannaschii.</title>
        <authorList>
            <person name="Bult C.J."/>
            <person name="White O."/>
            <person name="Olsen G.J."/>
            <person name="Zhou L."/>
            <person name="Fleischmann R.D."/>
            <person name="Sutton G.G."/>
            <person name="Blake J.A."/>
            <person name="FitzGerald L.M."/>
            <person name="Clayton R.A."/>
            <person name="Gocayne J.D."/>
            <person name="Kerlavage A.R."/>
            <person name="Dougherty B.A."/>
            <person name="Tomb J.-F."/>
            <person name="Adams M.D."/>
            <person name="Reich C.I."/>
            <person name="Overbeek R."/>
            <person name="Kirkness E.F."/>
            <person name="Weinstock K.G."/>
            <person name="Merrick J.M."/>
            <person name="Glodek A."/>
            <person name="Scott J.L."/>
            <person name="Geoghagen N.S.M."/>
            <person name="Weidman J.F."/>
            <person name="Fuhrmann J.L."/>
            <person name="Nguyen D."/>
            <person name="Utterback T.R."/>
            <person name="Kelley J.M."/>
            <person name="Peterson J.D."/>
            <person name="Sadow P.W."/>
            <person name="Hanna M.C."/>
            <person name="Cotton M.D."/>
            <person name="Roberts K.M."/>
            <person name="Hurst M.A."/>
            <person name="Kaine B.P."/>
            <person name="Borodovsky M."/>
            <person name="Klenk H.-P."/>
            <person name="Fraser C.M."/>
            <person name="Smith H.O."/>
            <person name="Woese C.R."/>
            <person name="Venter J.C."/>
        </authorList>
    </citation>
    <scope>NUCLEOTIDE SEQUENCE [LARGE SCALE GENOMIC DNA]</scope>
    <source>
        <strain>ATCC 43067 / DSM 2661 / JAL-1 / JCM 10045 / NBRC 100440</strain>
    </source>
</reference>
<dbReference type="EC" id="1.2.7.3"/>
<dbReference type="EMBL" id="L77117">
    <property type="protein sequence ID" value="AAB98531.1"/>
    <property type="molecule type" value="Genomic_DNA"/>
</dbReference>
<dbReference type="PIR" id="A64367">
    <property type="entry name" value="A64367"/>
</dbReference>
<dbReference type="RefSeq" id="WP_010870041.1">
    <property type="nucleotide sequence ID" value="NC_000909.1"/>
</dbReference>
<dbReference type="SMR" id="Q57957"/>
<dbReference type="FunCoup" id="Q57957">
    <property type="interactions" value="94"/>
</dbReference>
<dbReference type="STRING" id="243232.MJ_0537"/>
<dbReference type="PaxDb" id="243232-MJ_0537"/>
<dbReference type="DNASU" id="1451402"/>
<dbReference type="EnsemblBacteria" id="AAB98531">
    <property type="protein sequence ID" value="AAB98531"/>
    <property type="gene ID" value="MJ_0537"/>
</dbReference>
<dbReference type="GeneID" id="1451402"/>
<dbReference type="KEGG" id="mja:MJ_0537"/>
<dbReference type="eggNOG" id="arCOG01599">
    <property type="taxonomic scope" value="Archaea"/>
</dbReference>
<dbReference type="HOGENOM" id="CLU_048564_2_0_2"/>
<dbReference type="InParanoid" id="Q57957"/>
<dbReference type="OrthoDB" id="30755at2157"/>
<dbReference type="PhylomeDB" id="Q57957"/>
<dbReference type="Proteomes" id="UP000000805">
    <property type="component" value="Chromosome"/>
</dbReference>
<dbReference type="GO" id="GO:0047553">
    <property type="term" value="F:2-oxoglutarate synthase activity"/>
    <property type="evidence" value="ECO:0007669"/>
    <property type="project" value="UniProtKB-EC"/>
</dbReference>
<dbReference type="GO" id="GO:0016491">
    <property type="term" value="F:oxidoreductase activity"/>
    <property type="evidence" value="ECO:0000318"/>
    <property type="project" value="GO_Central"/>
</dbReference>
<dbReference type="GO" id="GO:0030976">
    <property type="term" value="F:thiamine pyrophosphate binding"/>
    <property type="evidence" value="ECO:0007669"/>
    <property type="project" value="InterPro"/>
</dbReference>
<dbReference type="GO" id="GO:0006082">
    <property type="term" value="P:organic acid metabolic process"/>
    <property type="evidence" value="ECO:0007669"/>
    <property type="project" value="UniProtKB-ARBA"/>
</dbReference>
<dbReference type="GO" id="GO:0044272">
    <property type="term" value="P:sulfur compound biosynthetic process"/>
    <property type="evidence" value="ECO:0007669"/>
    <property type="project" value="UniProtKB-ARBA"/>
</dbReference>
<dbReference type="CDD" id="cd03375">
    <property type="entry name" value="TPP_OGFOR"/>
    <property type="match status" value="1"/>
</dbReference>
<dbReference type="Gene3D" id="3.40.50.970">
    <property type="match status" value="1"/>
</dbReference>
<dbReference type="InterPro" id="IPR051457">
    <property type="entry name" value="2-oxoacid:Fd_oxidoreductase"/>
</dbReference>
<dbReference type="InterPro" id="IPR029061">
    <property type="entry name" value="THDP-binding"/>
</dbReference>
<dbReference type="InterPro" id="IPR011766">
    <property type="entry name" value="TPP_enzyme_TPP-bd"/>
</dbReference>
<dbReference type="PANTHER" id="PTHR48084">
    <property type="entry name" value="2-OXOGLUTARATE OXIDOREDUCTASE SUBUNIT KORB-RELATED"/>
    <property type="match status" value="1"/>
</dbReference>
<dbReference type="PANTHER" id="PTHR48084:SF1">
    <property type="entry name" value="2-OXOGLUTARATE SYNTHASE SUBUNIT KORB"/>
    <property type="match status" value="1"/>
</dbReference>
<dbReference type="Pfam" id="PF02775">
    <property type="entry name" value="TPP_enzyme_C"/>
    <property type="match status" value="1"/>
</dbReference>
<dbReference type="SUPFAM" id="SSF52518">
    <property type="entry name" value="Thiamin diphosphate-binding fold (THDP-binding)"/>
    <property type="match status" value="1"/>
</dbReference>
<name>KORB_METJA</name>
<proteinExistence type="predicted"/>
<keyword id="KW-0560">Oxidoreductase</keyword>
<keyword id="KW-1185">Reference proteome</keyword>
<comment type="catalytic activity">
    <reaction>
        <text>2 oxidized [2Fe-2S]-[ferredoxin] + 2-oxoglutarate + CoA = succinyl-CoA + 2 reduced [2Fe-2S]-[ferredoxin] + CO2 + H(+)</text>
        <dbReference type="Rhea" id="RHEA:17297"/>
        <dbReference type="Rhea" id="RHEA-COMP:10000"/>
        <dbReference type="Rhea" id="RHEA-COMP:10001"/>
        <dbReference type="ChEBI" id="CHEBI:15378"/>
        <dbReference type="ChEBI" id="CHEBI:16526"/>
        <dbReference type="ChEBI" id="CHEBI:16810"/>
        <dbReference type="ChEBI" id="CHEBI:33737"/>
        <dbReference type="ChEBI" id="CHEBI:33738"/>
        <dbReference type="ChEBI" id="CHEBI:57287"/>
        <dbReference type="ChEBI" id="CHEBI:57292"/>
        <dbReference type="EC" id="1.2.7.3"/>
    </reaction>
</comment>
<comment type="subunit">
    <text>Heterotetramer of the KorA, KorB, KorC and KorD subunits.</text>
</comment>
<feature type="chain" id="PRO_0000099942" description="2-oxoglutarate synthase subunit KorB">
    <location>
        <begin position="1"/>
        <end position="270"/>
    </location>
</feature>
<organism>
    <name type="scientific">Methanocaldococcus jannaschii (strain ATCC 43067 / DSM 2661 / JAL-1 / JCM 10045 / NBRC 100440)</name>
    <name type="common">Methanococcus jannaschii</name>
    <dbReference type="NCBI Taxonomy" id="243232"/>
    <lineage>
        <taxon>Archaea</taxon>
        <taxon>Methanobacteriati</taxon>
        <taxon>Methanobacteriota</taxon>
        <taxon>Methanomada group</taxon>
        <taxon>Methanococci</taxon>
        <taxon>Methanococcales</taxon>
        <taxon>Methanocaldococcaceae</taxon>
        <taxon>Methanocaldococcus</taxon>
    </lineage>
</organism>
<gene>
    <name type="primary">korB</name>
    <name type="ordered locus">MJ0537</name>
</gene>